<accession>P54158</accession>
<protein>
    <recommendedName>
        <fullName>Uncharacterized protein YpbQ</fullName>
    </recommendedName>
</protein>
<gene>
    <name type="primary">ypbQ</name>
    <name type="ordered locus">BSU22040</name>
</gene>
<feature type="chain" id="PRO_0000049681" description="Uncharacterized protein YpbQ">
    <location>
        <begin position="1"/>
        <end position="168"/>
    </location>
</feature>
<feature type="transmembrane region" description="Helical" evidence="1">
    <location>
        <begin position="1"/>
        <end position="21"/>
    </location>
</feature>
<feature type="transmembrane region" description="Helical" evidence="1">
    <location>
        <begin position="41"/>
        <end position="61"/>
    </location>
</feature>
<feature type="transmembrane region" description="Helical" evidence="1">
    <location>
        <begin position="68"/>
        <end position="88"/>
    </location>
</feature>
<feature type="transmembrane region" description="Helical" evidence="1">
    <location>
        <begin position="123"/>
        <end position="143"/>
    </location>
</feature>
<name>YPBQ_BACSU</name>
<keyword id="KW-1003">Cell membrane</keyword>
<keyword id="KW-0472">Membrane</keyword>
<keyword id="KW-1185">Reference proteome</keyword>
<keyword id="KW-0812">Transmembrane</keyword>
<keyword id="KW-1133">Transmembrane helix</keyword>
<reference key="1">
    <citation type="journal article" date="1996" name="Microbiology">
        <title>Organization of the Bacillus subtilis 168 chromosome between kdg and the attachment site of the SP beta prophage: use of long accurate PCR and yeast artificial chromosomes for sequencing.</title>
        <authorList>
            <person name="Capuano V."/>
            <person name="Galleron N."/>
            <person name="Pujic P."/>
            <person name="Sorokin A."/>
            <person name="Ehrlich S.D."/>
        </authorList>
    </citation>
    <scope>NUCLEOTIDE SEQUENCE [GENOMIC DNA]</scope>
    <source>
        <strain>168 / Marburg / ATCC 6051 / DSM 10 / JCM 1465 / NBRC 13719 / NCIMB 3610 / NRRL NRS-744 / VKM B-501</strain>
    </source>
</reference>
<reference key="2">
    <citation type="journal article" date="1997" name="Nature">
        <title>The complete genome sequence of the Gram-positive bacterium Bacillus subtilis.</title>
        <authorList>
            <person name="Kunst F."/>
            <person name="Ogasawara N."/>
            <person name="Moszer I."/>
            <person name="Albertini A.M."/>
            <person name="Alloni G."/>
            <person name="Azevedo V."/>
            <person name="Bertero M.G."/>
            <person name="Bessieres P."/>
            <person name="Bolotin A."/>
            <person name="Borchert S."/>
            <person name="Borriss R."/>
            <person name="Boursier L."/>
            <person name="Brans A."/>
            <person name="Braun M."/>
            <person name="Brignell S.C."/>
            <person name="Bron S."/>
            <person name="Brouillet S."/>
            <person name="Bruschi C.V."/>
            <person name="Caldwell B."/>
            <person name="Capuano V."/>
            <person name="Carter N.M."/>
            <person name="Choi S.-K."/>
            <person name="Codani J.-J."/>
            <person name="Connerton I.F."/>
            <person name="Cummings N.J."/>
            <person name="Daniel R.A."/>
            <person name="Denizot F."/>
            <person name="Devine K.M."/>
            <person name="Duesterhoeft A."/>
            <person name="Ehrlich S.D."/>
            <person name="Emmerson P.T."/>
            <person name="Entian K.-D."/>
            <person name="Errington J."/>
            <person name="Fabret C."/>
            <person name="Ferrari E."/>
            <person name="Foulger D."/>
            <person name="Fritz C."/>
            <person name="Fujita M."/>
            <person name="Fujita Y."/>
            <person name="Fuma S."/>
            <person name="Galizzi A."/>
            <person name="Galleron N."/>
            <person name="Ghim S.-Y."/>
            <person name="Glaser P."/>
            <person name="Goffeau A."/>
            <person name="Golightly E.J."/>
            <person name="Grandi G."/>
            <person name="Guiseppi G."/>
            <person name="Guy B.J."/>
            <person name="Haga K."/>
            <person name="Haiech J."/>
            <person name="Harwood C.R."/>
            <person name="Henaut A."/>
            <person name="Hilbert H."/>
            <person name="Holsappel S."/>
            <person name="Hosono S."/>
            <person name="Hullo M.-F."/>
            <person name="Itaya M."/>
            <person name="Jones L.-M."/>
            <person name="Joris B."/>
            <person name="Karamata D."/>
            <person name="Kasahara Y."/>
            <person name="Klaerr-Blanchard M."/>
            <person name="Klein C."/>
            <person name="Kobayashi Y."/>
            <person name="Koetter P."/>
            <person name="Koningstein G."/>
            <person name="Krogh S."/>
            <person name="Kumano M."/>
            <person name="Kurita K."/>
            <person name="Lapidus A."/>
            <person name="Lardinois S."/>
            <person name="Lauber J."/>
            <person name="Lazarevic V."/>
            <person name="Lee S.-M."/>
            <person name="Levine A."/>
            <person name="Liu H."/>
            <person name="Masuda S."/>
            <person name="Mauel C."/>
            <person name="Medigue C."/>
            <person name="Medina N."/>
            <person name="Mellado R.P."/>
            <person name="Mizuno M."/>
            <person name="Moestl D."/>
            <person name="Nakai S."/>
            <person name="Noback M."/>
            <person name="Noone D."/>
            <person name="O'Reilly M."/>
            <person name="Ogawa K."/>
            <person name="Ogiwara A."/>
            <person name="Oudega B."/>
            <person name="Park S.-H."/>
            <person name="Parro V."/>
            <person name="Pohl T.M."/>
            <person name="Portetelle D."/>
            <person name="Porwollik S."/>
            <person name="Prescott A.M."/>
            <person name="Presecan E."/>
            <person name="Pujic P."/>
            <person name="Purnelle B."/>
            <person name="Rapoport G."/>
            <person name="Rey M."/>
            <person name="Reynolds S."/>
            <person name="Rieger M."/>
            <person name="Rivolta C."/>
            <person name="Rocha E."/>
            <person name="Roche B."/>
            <person name="Rose M."/>
            <person name="Sadaie Y."/>
            <person name="Sato T."/>
            <person name="Scanlan E."/>
            <person name="Schleich S."/>
            <person name="Schroeter R."/>
            <person name="Scoffone F."/>
            <person name="Sekiguchi J."/>
            <person name="Sekowska A."/>
            <person name="Seror S.J."/>
            <person name="Serror P."/>
            <person name="Shin B.-S."/>
            <person name="Soldo B."/>
            <person name="Sorokin A."/>
            <person name="Tacconi E."/>
            <person name="Takagi T."/>
            <person name="Takahashi H."/>
            <person name="Takemaru K."/>
            <person name="Takeuchi M."/>
            <person name="Tamakoshi A."/>
            <person name="Tanaka T."/>
            <person name="Terpstra P."/>
            <person name="Tognoni A."/>
            <person name="Tosato V."/>
            <person name="Uchiyama S."/>
            <person name="Vandenbol M."/>
            <person name="Vannier F."/>
            <person name="Vassarotti A."/>
            <person name="Viari A."/>
            <person name="Wambutt R."/>
            <person name="Wedler E."/>
            <person name="Wedler H."/>
            <person name="Weitzenegger T."/>
            <person name="Winters P."/>
            <person name="Wipat A."/>
            <person name="Yamamoto H."/>
            <person name="Yamane K."/>
            <person name="Yasumoto K."/>
            <person name="Yata K."/>
            <person name="Yoshida K."/>
            <person name="Yoshikawa H.-F."/>
            <person name="Zumstein E."/>
            <person name="Yoshikawa H."/>
            <person name="Danchin A."/>
        </authorList>
    </citation>
    <scope>NUCLEOTIDE SEQUENCE [LARGE SCALE GENOMIC DNA]</scope>
    <source>
        <strain>168</strain>
    </source>
</reference>
<reference key="3">
    <citation type="journal article" date="1993" name="J. Bacteriol.">
        <title>Metalloregulation in Bacillus subtilis: isolation and characterization of two genes differentially repressed by metal ions.</title>
        <authorList>
            <person name="Chen L."/>
            <person name="James L.P."/>
            <person name="Helmann J.D."/>
        </authorList>
    </citation>
    <scope>NUCLEOTIDE SEQUENCE [GENOMIC DNA] OF 155-168</scope>
</reference>
<comment type="subcellular location">
    <subcellularLocation>
        <location evidence="2">Cell membrane</location>
        <topology evidence="2">Multi-pass membrane protein</topology>
    </subcellularLocation>
</comment>
<evidence type="ECO:0000255" key="1"/>
<evidence type="ECO:0000305" key="2"/>
<proteinExistence type="predicted"/>
<dbReference type="EMBL" id="L77246">
    <property type="protein sequence ID" value="AAA96614.1"/>
    <property type="molecule type" value="Genomic_DNA"/>
</dbReference>
<dbReference type="EMBL" id="AL009126">
    <property type="protein sequence ID" value="CAB14121.1"/>
    <property type="molecule type" value="Genomic_DNA"/>
</dbReference>
<dbReference type="EMBL" id="L19548">
    <property type="status" value="NOT_ANNOTATED_CDS"/>
    <property type="molecule type" value="Genomic_DNA"/>
</dbReference>
<dbReference type="EMBL" id="Z22929">
    <property type="status" value="NOT_ANNOTATED_CDS"/>
    <property type="molecule type" value="Genomic_DNA"/>
</dbReference>
<dbReference type="PIR" id="D69933">
    <property type="entry name" value="D69933"/>
</dbReference>
<dbReference type="FunCoup" id="P54158">
    <property type="interactions" value="115"/>
</dbReference>
<dbReference type="STRING" id="224308.BSU22040"/>
<dbReference type="PaxDb" id="224308-BSU22040"/>
<dbReference type="DNASU" id="939072"/>
<dbReference type="EnsemblBacteria" id="CAB14121">
    <property type="protein sequence ID" value="CAB14121"/>
    <property type="gene ID" value="BSU_22040"/>
</dbReference>
<dbReference type="GeneID" id="939072"/>
<dbReference type="KEGG" id="bsu:BSU22040"/>
<dbReference type="PATRIC" id="fig|224308.179.peg.2408"/>
<dbReference type="eggNOG" id="COG1755">
    <property type="taxonomic scope" value="Bacteria"/>
</dbReference>
<dbReference type="InParanoid" id="P54158"/>
<dbReference type="OrthoDB" id="7203053at2"/>
<dbReference type="PhylomeDB" id="P54158"/>
<dbReference type="BioCyc" id="BSUB:BSU22040-MONOMER"/>
<dbReference type="Proteomes" id="UP000001570">
    <property type="component" value="Chromosome"/>
</dbReference>
<dbReference type="GO" id="GO:0005886">
    <property type="term" value="C:plasma membrane"/>
    <property type="evidence" value="ECO:0007669"/>
    <property type="project" value="UniProtKB-SubCell"/>
</dbReference>
<dbReference type="GO" id="GO:0004671">
    <property type="term" value="F:protein C-terminal S-isoprenylcysteine carboxyl O-methyltransferase activity"/>
    <property type="evidence" value="ECO:0007669"/>
    <property type="project" value="InterPro"/>
</dbReference>
<dbReference type="Gene3D" id="1.20.120.1630">
    <property type="match status" value="1"/>
</dbReference>
<dbReference type="InterPro" id="IPR007269">
    <property type="entry name" value="ICMT_MeTrfase"/>
</dbReference>
<dbReference type="InterPro" id="IPR052527">
    <property type="entry name" value="Metal_cation-efflux_comp"/>
</dbReference>
<dbReference type="PANTHER" id="PTHR43847">
    <property type="entry name" value="BLL3993 PROTEIN"/>
    <property type="match status" value="1"/>
</dbReference>
<dbReference type="PANTHER" id="PTHR43847:SF1">
    <property type="entry name" value="BLL3993 PROTEIN"/>
    <property type="match status" value="1"/>
</dbReference>
<dbReference type="Pfam" id="PF04140">
    <property type="entry name" value="ICMT"/>
    <property type="match status" value="1"/>
</dbReference>
<sequence length="168" mass="19316">MFWLLIAILIVQRAAEMAVARQNEQKVKKQGAIEFGESHYPYIITMHILFFLSLIAEVLLMNKQPSSWWLGIAAVILSVQIVRYWALCSLGAYWNTKILVVPGVELVKKGPYKWMKHPNYAVVILEILLIPLLYQAYVTMCLFSIFNAVLLSVRIRAEDKALQEYSVK</sequence>
<organism>
    <name type="scientific">Bacillus subtilis (strain 168)</name>
    <dbReference type="NCBI Taxonomy" id="224308"/>
    <lineage>
        <taxon>Bacteria</taxon>
        <taxon>Bacillati</taxon>
        <taxon>Bacillota</taxon>
        <taxon>Bacilli</taxon>
        <taxon>Bacillales</taxon>
        <taxon>Bacillaceae</taxon>
        <taxon>Bacillus</taxon>
    </lineage>
</organism>